<dbReference type="EMBL" id="AL590842">
    <property type="protein sequence ID" value="CAL20029.1"/>
    <property type="molecule type" value="Genomic_DNA"/>
</dbReference>
<dbReference type="EMBL" id="AE009952">
    <property type="protein sequence ID" value="AAM86349.1"/>
    <property type="molecule type" value="Genomic_DNA"/>
</dbReference>
<dbReference type="EMBL" id="AE017042">
    <property type="protein sequence ID" value="AAS61459.1"/>
    <property type="status" value="ALT_INIT"/>
    <property type="molecule type" value="Genomic_DNA"/>
</dbReference>
<dbReference type="PIR" id="AC0168">
    <property type="entry name" value="AC0168"/>
</dbReference>
<dbReference type="RefSeq" id="WP_002211338.1">
    <property type="nucleotide sequence ID" value="NZ_WUCM01000096.1"/>
</dbReference>
<dbReference type="RefSeq" id="YP_002346400.1">
    <property type="nucleotide sequence ID" value="NC_003143.1"/>
</dbReference>
<dbReference type="PDB" id="4KI3">
    <property type="method" value="X-ray"/>
    <property type="resolution" value="1.70 A"/>
    <property type="chains" value="A/B/C/D/E/F/G/H/I/J/K/L=21-202"/>
</dbReference>
<dbReference type="PDBsum" id="4KI3"/>
<dbReference type="SMR" id="Q8ZGC6"/>
<dbReference type="STRING" id="214092.YPO1377"/>
<dbReference type="PaxDb" id="214092-YPO1377"/>
<dbReference type="DNASU" id="1147745"/>
<dbReference type="EnsemblBacteria" id="AAS61459">
    <property type="protein sequence ID" value="AAS61459"/>
    <property type="gene ID" value="YP_1216"/>
</dbReference>
<dbReference type="GeneID" id="57977173"/>
<dbReference type="KEGG" id="ype:YPO1377"/>
<dbReference type="KEGG" id="ypk:y2798"/>
<dbReference type="KEGG" id="ypm:YP_1216"/>
<dbReference type="PATRIC" id="fig|214092.21.peg.1700"/>
<dbReference type="eggNOG" id="COG2834">
    <property type="taxonomic scope" value="Bacteria"/>
</dbReference>
<dbReference type="HOGENOM" id="CLU_087560_1_1_6"/>
<dbReference type="OMA" id="YDPFVEQ"/>
<dbReference type="OrthoDB" id="9787361at2"/>
<dbReference type="Proteomes" id="UP000000815">
    <property type="component" value="Chromosome"/>
</dbReference>
<dbReference type="Proteomes" id="UP000001019">
    <property type="component" value="Chromosome"/>
</dbReference>
<dbReference type="Proteomes" id="UP000002490">
    <property type="component" value="Chromosome"/>
</dbReference>
<dbReference type="GO" id="GO:0030288">
    <property type="term" value="C:outer membrane-bounded periplasmic space"/>
    <property type="evidence" value="ECO:0000318"/>
    <property type="project" value="GO_Central"/>
</dbReference>
<dbReference type="GO" id="GO:0044874">
    <property type="term" value="P:lipoprotein localization to outer membrane"/>
    <property type="evidence" value="ECO:0000318"/>
    <property type="project" value="GO_Central"/>
</dbReference>
<dbReference type="GO" id="GO:0042953">
    <property type="term" value="P:lipoprotein transport"/>
    <property type="evidence" value="ECO:0000318"/>
    <property type="project" value="GO_Central"/>
</dbReference>
<dbReference type="CDD" id="cd16325">
    <property type="entry name" value="LolA"/>
    <property type="match status" value="1"/>
</dbReference>
<dbReference type="FunFam" id="2.50.20.10:FF:000001">
    <property type="entry name" value="Outer-membrane lipoprotein carrier protein"/>
    <property type="match status" value="1"/>
</dbReference>
<dbReference type="Gene3D" id="2.50.20.10">
    <property type="entry name" value="Lipoprotein localisation LolA/LolB/LppX"/>
    <property type="match status" value="1"/>
</dbReference>
<dbReference type="HAMAP" id="MF_00240">
    <property type="entry name" value="LolA"/>
    <property type="match status" value="1"/>
</dbReference>
<dbReference type="InterPro" id="IPR029046">
    <property type="entry name" value="LolA/LolB/LppX"/>
</dbReference>
<dbReference type="InterPro" id="IPR004564">
    <property type="entry name" value="OM_lipoprot_carrier_LolA-like"/>
</dbReference>
<dbReference type="InterPro" id="IPR018323">
    <property type="entry name" value="OM_lipoprot_carrier_LolA_Pbac"/>
</dbReference>
<dbReference type="NCBIfam" id="TIGR00547">
    <property type="entry name" value="lolA"/>
    <property type="match status" value="1"/>
</dbReference>
<dbReference type="PANTHER" id="PTHR35869">
    <property type="entry name" value="OUTER-MEMBRANE LIPOPROTEIN CARRIER PROTEIN"/>
    <property type="match status" value="1"/>
</dbReference>
<dbReference type="PANTHER" id="PTHR35869:SF1">
    <property type="entry name" value="OUTER-MEMBRANE LIPOPROTEIN CARRIER PROTEIN"/>
    <property type="match status" value="1"/>
</dbReference>
<dbReference type="Pfam" id="PF03548">
    <property type="entry name" value="LolA"/>
    <property type="match status" value="1"/>
</dbReference>
<dbReference type="SUPFAM" id="SSF89392">
    <property type="entry name" value="Prokaryotic lipoproteins and lipoprotein localization factors"/>
    <property type="match status" value="1"/>
</dbReference>
<feature type="signal peptide" evidence="1">
    <location>
        <begin position="1"/>
        <end position="21"/>
    </location>
</feature>
<feature type="chain" id="PRO_0000018289" description="Outer-membrane lipoprotein carrier protein">
    <location>
        <begin position="22"/>
        <end position="202"/>
    </location>
</feature>
<name>LOLA_YERPE</name>
<accession>Q8ZGC6</accession>
<accession>Q0WH38</accession>
<protein>
    <recommendedName>
        <fullName evidence="1">Outer-membrane lipoprotein carrier protein</fullName>
    </recommendedName>
</protein>
<sequence>MKRLLVACCFLSGLISASALADASTDLQNRLSKVNSFHASFSQAVTSSDGAVVQEGEGELWVKRPNLFNWHMTSPDESVLISDGETLWFYNPFVEQATATWLKNATGNTPFMLITRNNPDDWKQYNVKQKGDDFELTPKSASGNLKQFAISVTPSGTIKSFTAVEQDGQRSAYTLKSQQSSVVDASKFTFTPPKGVTLDDQR</sequence>
<keyword id="KW-0002">3D-structure</keyword>
<keyword id="KW-0143">Chaperone</keyword>
<keyword id="KW-0574">Periplasm</keyword>
<keyword id="KW-0653">Protein transport</keyword>
<keyword id="KW-1185">Reference proteome</keyword>
<keyword id="KW-0732">Signal</keyword>
<keyword id="KW-0813">Transport</keyword>
<reference key="1">
    <citation type="journal article" date="2001" name="Nature">
        <title>Genome sequence of Yersinia pestis, the causative agent of plague.</title>
        <authorList>
            <person name="Parkhill J."/>
            <person name="Wren B.W."/>
            <person name="Thomson N.R."/>
            <person name="Titball R.W."/>
            <person name="Holden M.T.G."/>
            <person name="Prentice M.B."/>
            <person name="Sebaihia M."/>
            <person name="James K.D."/>
            <person name="Churcher C.M."/>
            <person name="Mungall K.L."/>
            <person name="Baker S."/>
            <person name="Basham D."/>
            <person name="Bentley S.D."/>
            <person name="Brooks K."/>
            <person name="Cerdeno-Tarraga A.-M."/>
            <person name="Chillingworth T."/>
            <person name="Cronin A."/>
            <person name="Davies R.M."/>
            <person name="Davis P."/>
            <person name="Dougan G."/>
            <person name="Feltwell T."/>
            <person name="Hamlin N."/>
            <person name="Holroyd S."/>
            <person name="Jagels K."/>
            <person name="Karlyshev A.V."/>
            <person name="Leather S."/>
            <person name="Moule S."/>
            <person name="Oyston P.C.F."/>
            <person name="Quail M.A."/>
            <person name="Rutherford K.M."/>
            <person name="Simmonds M."/>
            <person name="Skelton J."/>
            <person name="Stevens K."/>
            <person name="Whitehead S."/>
            <person name="Barrell B.G."/>
        </authorList>
    </citation>
    <scope>NUCLEOTIDE SEQUENCE [LARGE SCALE GENOMIC DNA]</scope>
    <source>
        <strain>CO-92 / Biovar Orientalis</strain>
    </source>
</reference>
<reference key="2">
    <citation type="journal article" date="2002" name="J. Bacteriol.">
        <title>Genome sequence of Yersinia pestis KIM.</title>
        <authorList>
            <person name="Deng W."/>
            <person name="Burland V."/>
            <person name="Plunkett G. III"/>
            <person name="Boutin A."/>
            <person name="Mayhew G.F."/>
            <person name="Liss P."/>
            <person name="Perna N.T."/>
            <person name="Rose D.J."/>
            <person name="Mau B."/>
            <person name="Zhou S."/>
            <person name="Schwartz D.C."/>
            <person name="Fetherston J.D."/>
            <person name="Lindler L.E."/>
            <person name="Brubaker R.R."/>
            <person name="Plano G.V."/>
            <person name="Straley S.C."/>
            <person name="McDonough K.A."/>
            <person name="Nilles M.L."/>
            <person name="Matson J.S."/>
            <person name="Blattner F.R."/>
            <person name="Perry R.D."/>
        </authorList>
    </citation>
    <scope>NUCLEOTIDE SEQUENCE [LARGE SCALE GENOMIC DNA]</scope>
    <source>
        <strain>KIM10+ / Biovar Mediaevalis</strain>
    </source>
</reference>
<reference key="3">
    <citation type="journal article" date="2004" name="DNA Res.">
        <title>Complete genome sequence of Yersinia pestis strain 91001, an isolate avirulent to humans.</title>
        <authorList>
            <person name="Song Y."/>
            <person name="Tong Z."/>
            <person name="Wang J."/>
            <person name="Wang L."/>
            <person name="Guo Z."/>
            <person name="Han Y."/>
            <person name="Zhang J."/>
            <person name="Pei D."/>
            <person name="Zhou D."/>
            <person name="Qin H."/>
            <person name="Pang X."/>
            <person name="Han Y."/>
            <person name="Zhai J."/>
            <person name="Li M."/>
            <person name="Cui B."/>
            <person name="Qi Z."/>
            <person name="Jin L."/>
            <person name="Dai R."/>
            <person name="Chen F."/>
            <person name="Li S."/>
            <person name="Ye C."/>
            <person name="Du Z."/>
            <person name="Lin W."/>
            <person name="Wang J."/>
            <person name="Yu J."/>
            <person name="Yang H."/>
            <person name="Wang J."/>
            <person name="Huang P."/>
            <person name="Yang R."/>
        </authorList>
    </citation>
    <scope>NUCLEOTIDE SEQUENCE [LARGE SCALE GENOMIC DNA]</scope>
    <source>
        <strain>91001 / Biovar Mediaevalis</strain>
    </source>
</reference>
<reference key="4">
    <citation type="submission" date="2013-05" db="PDB data bank">
        <title>1.70 Angstrom resolution crystal structure of outer-membrane lipoprotein carrier protein (lolA) from Yersinia pestis CO92.</title>
        <authorList>
            <consortium name="Center for Structural Genomics of Infectious Diseases (CSGID)"/>
            <person name="Halavaty A.S."/>
            <person name="Wawrzak Z."/>
            <person name="Kudritska M."/>
            <person name="Savchenko A."/>
            <person name="Anderson W.F."/>
        </authorList>
    </citation>
    <scope>X-RAY CRYSTALLOGRAPHY (1.70 ANGSTROMS) OF 21-202</scope>
</reference>
<organism>
    <name type="scientific">Yersinia pestis</name>
    <dbReference type="NCBI Taxonomy" id="632"/>
    <lineage>
        <taxon>Bacteria</taxon>
        <taxon>Pseudomonadati</taxon>
        <taxon>Pseudomonadota</taxon>
        <taxon>Gammaproteobacteria</taxon>
        <taxon>Enterobacterales</taxon>
        <taxon>Yersiniaceae</taxon>
        <taxon>Yersinia</taxon>
    </lineage>
</organism>
<proteinExistence type="evidence at protein level"/>
<gene>
    <name evidence="1" type="primary">lolA</name>
    <name type="ordered locus">YPO1377</name>
    <name type="ordered locus">y2798</name>
    <name type="ordered locus">YP_1216</name>
</gene>
<comment type="function">
    <text evidence="1">Participates in the translocation of lipoproteins from the inner membrane to the outer membrane. Only forms a complex with a lipoprotein if the residue after the N-terminal Cys is not an aspartate (The Asp acts as a targeting signal to indicate that the lipoprotein should stay in the inner membrane).</text>
</comment>
<comment type="subunit">
    <text evidence="1">Monomer.</text>
</comment>
<comment type="subcellular location">
    <subcellularLocation>
        <location evidence="1">Periplasm</location>
    </subcellularLocation>
</comment>
<comment type="similarity">
    <text evidence="1">Belongs to the LolA family.</text>
</comment>
<comment type="sequence caution" evidence="2">
    <conflict type="erroneous initiation">
        <sequence resource="EMBL-CDS" id="AAS61459"/>
    </conflict>
    <text>Truncated N-terminus.</text>
</comment>
<evidence type="ECO:0000255" key="1">
    <source>
        <dbReference type="HAMAP-Rule" id="MF_00240"/>
    </source>
</evidence>
<evidence type="ECO:0000305" key="2"/>